<protein>
    <recommendedName>
        <fullName evidence="1">Cyclic pyranopterin monophosphate synthase</fullName>
        <ecNumber evidence="1">4.6.1.17</ecNumber>
    </recommendedName>
    <alternativeName>
        <fullName evidence="1">Molybdenum cofactor biosynthesis protein C</fullName>
    </alternativeName>
</protein>
<dbReference type="EC" id="4.6.1.17" evidence="1"/>
<dbReference type="EMBL" id="CP000436">
    <property type="protein sequence ID" value="ABI25305.1"/>
    <property type="molecule type" value="Genomic_DNA"/>
</dbReference>
<dbReference type="SMR" id="Q0I4B6"/>
<dbReference type="KEGG" id="hso:HS_1030"/>
<dbReference type="eggNOG" id="COG0315">
    <property type="taxonomic scope" value="Bacteria"/>
</dbReference>
<dbReference type="HOGENOM" id="CLU_074693_1_1_6"/>
<dbReference type="UniPathway" id="UPA00344"/>
<dbReference type="GO" id="GO:0061799">
    <property type="term" value="F:cyclic pyranopterin monophosphate synthase activity"/>
    <property type="evidence" value="ECO:0007669"/>
    <property type="project" value="UniProtKB-UniRule"/>
</dbReference>
<dbReference type="GO" id="GO:0061798">
    <property type="term" value="F:GTP 3',8'-cyclase activity"/>
    <property type="evidence" value="ECO:0007669"/>
    <property type="project" value="TreeGrafter"/>
</dbReference>
<dbReference type="GO" id="GO:0006777">
    <property type="term" value="P:Mo-molybdopterin cofactor biosynthetic process"/>
    <property type="evidence" value="ECO:0007669"/>
    <property type="project" value="UniProtKB-UniRule"/>
</dbReference>
<dbReference type="CDD" id="cd01420">
    <property type="entry name" value="MoaC_PE"/>
    <property type="match status" value="1"/>
</dbReference>
<dbReference type="FunFam" id="3.30.70.640:FF:000001">
    <property type="entry name" value="Cyclic pyranopterin monophosphate synthase"/>
    <property type="match status" value="1"/>
</dbReference>
<dbReference type="Gene3D" id="3.30.70.640">
    <property type="entry name" value="Molybdopterin cofactor biosynthesis C (MoaC) domain"/>
    <property type="match status" value="1"/>
</dbReference>
<dbReference type="HAMAP" id="MF_01224_B">
    <property type="entry name" value="MoaC_B"/>
    <property type="match status" value="1"/>
</dbReference>
<dbReference type="InterPro" id="IPR023045">
    <property type="entry name" value="MoaC"/>
</dbReference>
<dbReference type="InterPro" id="IPR047594">
    <property type="entry name" value="MoaC_bact/euk"/>
</dbReference>
<dbReference type="InterPro" id="IPR036522">
    <property type="entry name" value="MoaC_sf"/>
</dbReference>
<dbReference type="InterPro" id="IPR050105">
    <property type="entry name" value="MoCo_biosynth_MoaA/MoaC"/>
</dbReference>
<dbReference type="InterPro" id="IPR002820">
    <property type="entry name" value="Mopterin_CF_biosynth-C_dom"/>
</dbReference>
<dbReference type="NCBIfam" id="TIGR00581">
    <property type="entry name" value="moaC"/>
    <property type="match status" value="1"/>
</dbReference>
<dbReference type="NCBIfam" id="NF006870">
    <property type="entry name" value="PRK09364.1"/>
    <property type="match status" value="1"/>
</dbReference>
<dbReference type="PANTHER" id="PTHR22960:SF0">
    <property type="entry name" value="MOLYBDENUM COFACTOR BIOSYNTHESIS PROTEIN 1"/>
    <property type="match status" value="1"/>
</dbReference>
<dbReference type="PANTHER" id="PTHR22960">
    <property type="entry name" value="MOLYBDOPTERIN COFACTOR SYNTHESIS PROTEIN A"/>
    <property type="match status" value="1"/>
</dbReference>
<dbReference type="Pfam" id="PF01967">
    <property type="entry name" value="MoaC"/>
    <property type="match status" value="1"/>
</dbReference>
<dbReference type="SUPFAM" id="SSF55040">
    <property type="entry name" value="Molybdenum cofactor biosynthesis protein C, MoaC"/>
    <property type="match status" value="1"/>
</dbReference>
<organism>
    <name type="scientific">Histophilus somni (strain 129Pt)</name>
    <name type="common">Haemophilus somnus</name>
    <dbReference type="NCBI Taxonomy" id="205914"/>
    <lineage>
        <taxon>Bacteria</taxon>
        <taxon>Pseudomonadati</taxon>
        <taxon>Pseudomonadota</taxon>
        <taxon>Gammaproteobacteria</taxon>
        <taxon>Pasteurellales</taxon>
        <taxon>Pasteurellaceae</taxon>
        <taxon>Histophilus</taxon>
    </lineage>
</organism>
<keyword id="KW-0456">Lyase</keyword>
<keyword id="KW-0501">Molybdenum cofactor biosynthesis</keyword>
<evidence type="ECO:0000255" key="1">
    <source>
        <dbReference type="HAMAP-Rule" id="MF_01224"/>
    </source>
</evidence>
<feature type="chain" id="PRO_1000054100" description="Cyclic pyranopterin monophosphate synthase">
    <location>
        <begin position="1"/>
        <end position="158"/>
    </location>
</feature>
<feature type="active site" evidence="1">
    <location>
        <position position="128"/>
    </location>
</feature>
<feature type="binding site" evidence="1">
    <location>
        <begin position="75"/>
        <end position="77"/>
    </location>
    <ligand>
        <name>substrate</name>
    </ligand>
</feature>
<feature type="binding site" evidence="1">
    <location>
        <begin position="113"/>
        <end position="114"/>
    </location>
    <ligand>
        <name>substrate</name>
    </ligand>
</feature>
<accession>Q0I4B6</accession>
<gene>
    <name evidence="1" type="primary">moaC</name>
    <name type="ordered locus">HS_1030</name>
</gene>
<comment type="function">
    <text evidence="1">Catalyzes the conversion of (8S)-3',8-cyclo-7,8-dihydroguanosine 5'-triphosphate to cyclic pyranopterin monophosphate (cPMP).</text>
</comment>
<comment type="catalytic activity">
    <reaction evidence="1">
        <text>(8S)-3',8-cyclo-7,8-dihydroguanosine 5'-triphosphate = cyclic pyranopterin phosphate + diphosphate</text>
        <dbReference type="Rhea" id="RHEA:49580"/>
        <dbReference type="ChEBI" id="CHEBI:33019"/>
        <dbReference type="ChEBI" id="CHEBI:59648"/>
        <dbReference type="ChEBI" id="CHEBI:131766"/>
        <dbReference type="EC" id="4.6.1.17"/>
    </reaction>
</comment>
<comment type="pathway">
    <text evidence="1">Cofactor biosynthesis; molybdopterin biosynthesis.</text>
</comment>
<comment type="subunit">
    <text evidence="1">Homohexamer; trimer of dimers.</text>
</comment>
<comment type="similarity">
    <text evidence="1">Belongs to the MoaC family.</text>
</comment>
<sequence length="158" mass="17169">MTTFTHINHQGEANMVDVSAKQDTVREARAEAFVRMSPATLEMILSGQHHKGDVFATARIAGIQAAKRTWELIPLCHPLLLSKVEVNLTALPEISSVRVESICKLSGKTGVEMEALTAASIAALTIYDMCKAVQKDIVIEQVRLLEKSGGKSGHFIAE</sequence>
<reference key="1">
    <citation type="journal article" date="2007" name="J. Bacteriol.">
        <title>Complete genome sequence of Haemophilus somnus (Histophilus somni) strain 129Pt and comparison to Haemophilus ducreyi 35000HP and Haemophilus influenzae Rd.</title>
        <authorList>
            <person name="Challacombe J.F."/>
            <person name="Duncan A.J."/>
            <person name="Brettin T.S."/>
            <person name="Bruce D."/>
            <person name="Chertkov O."/>
            <person name="Detter J.C."/>
            <person name="Han C.S."/>
            <person name="Misra M."/>
            <person name="Richardson P."/>
            <person name="Tapia R."/>
            <person name="Thayer N."/>
            <person name="Xie G."/>
            <person name="Inzana T.J."/>
        </authorList>
    </citation>
    <scope>NUCLEOTIDE SEQUENCE [LARGE SCALE GENOMIC DNA]</scope>
    <source>
        <strain>129Pt</strain>
    </source>
</reference>
<name>MOAC_HISS1</name>
<proteinExistence type="inferred from homology"/>